<feature type="chain" id="PRO_1000194071" description="Large ribosomal subunit protein bL35">
    <location>
        <begin position="1"/>
        <end position="67"/>
    </location>
</feature>
<organism>
    <name type="scientific">Acidovorax ebreus (strain TPSY)</name>
    <name type="common">Diaphorobacter sp. (strain TPSY)</name>
    <dbReference type="NCBI Taxonomy" id="535289"/>
    <lineage>
        <taxon>Bacteria</taxon>
        <taxon>Pseudomonadati</taxon>
        <taxon>Pseudomonadota</taxon>
        <taxon>Betaproteobacteria</taxon>
        <taxon>Burkholderiales</taxon>
        <taxon>Comamonadaceae</taxon>
        <taxon>Diaphorobacter</taxon>
    </lineage>
</organism>
<name>RL35_ACIET</name>
<keyword id="KW-1185">Reference proteome</keyword>
<keyword id="KW-0687">Ribonucleoprotein</keyword>
<keyword id="KW-0689">Ribosomal protein</keyword>
<protein>
    <recommendedName>
        <fullName evidence="1">Large ribosomal subunit protein bL35</fullName>
    </recommendedName>
    <alternativeName>
        <fullName evidence="2">50S ribosomal protein L35</fullName>
    </alternativeName>
</protein>
<reference key="1">
    <citation type="submission" date="2009-01" db="EMBL/GenBank/DDBJ databases">
        <title>Complete sequence of Diaphorobacter sp. TPSY.</title>
        <authorList>
            <consortium name="US DOE Joint Genome Institute"/>
            <person name="Lucas S."/>
            <person name="Copeland A."/>
            <person name="Lapidus A."/>
            <person name="Glavina del Rio T."/>
            <person name="Tice H."/>
            <person name="Bruce D."/>
            <person name="Goodwin L."/>
            <person name="Pitluck S."/>
            <person name="Chertkov O."/>
            <person name="Brettin T."/>
            <person name="Detter J.C."/>
            <person name="Han C."/>
            <person name="Larimer F."/>
            <person name="Land M."/>
            <person name="Hauser L."/>
            <person name="Kyrpides N."/>
            <person name="Mikhailova N."/>
            <person name="Coates J.D."/>
        </authorList>
    </citation>
    <scope>NUCLEOTIDE SEQUENCE [LARGE SCALE GENOMIC DNA]</scope>
    <source>
        <strain>TPSY</strain>
    </source>
</reference>
<proteinExistence type="inferred from homology"/>
<evidence type="ECO:0000255" key="1">
    <source>
        <dbReference type="HAMAP-Rule" id="MF_00514"/>
    </source>
</evidence>
<evidence type="ECO:0000305" key="2"/>
<sequence>MPKMKTKSSAKKRFRVRPGGTVKRGQAFKRHILTKKTTKNKRHLRGIVNVHEGDMGSIAKMLPSAGL</sequence>
<accession>B9MHY0</accession>
<dbReference type="EMBL" id="CP001392">
    <property type="protein sequence ID" value="ACM32912.1"/>
    <property type="molecule type" value="Genomic_DNA"/>
</dbReference>
<dbReference type="RefSeq" id="WP_011805603.1">
    <property type="nucleotide sequence ID" value="NC_011992.1"/>
</dbReference>
<dbReference type="SMR" id="B9MHY0"/>
<dbReference type="GeneID" id="84681843"/>
<dbReference type="KEGG" id="dia:Dtpsy_1450"/>
<dbReference type="eggNOG" id="COG0291">
    <property type="taxonomic scope" value="Bacteria"/>
</dbReference>
<dbReference type="HOGENOM" id="CLU_169643_1_0_4"/>
<dbReference type="Proteomes" id="UP000000450">
    <property type="component" value="Chromosome"/>
</dbReference>
<dbReference type="GO" id="GO:0022625">
    <property type="term" value="C:cytosolic large ribosomal subunit"/>
    <property type="evidence" value="ECO:0007669"/>
    <property type="project" value="TreeGrafter"/>
</dbReference>
<dbReference type="GO" id="GO:0003735">
    <property type="term" value="F:structural constituent of ribosome"/>
    <property type="evidence" value="ECO:0007669"/>
    <property type="project" value="InterPro"/>
</dbReference>
<dbReference type="GO" id="GO:0006412">
    <property type="term" value="P:translation"/>
    <property type="evidence" value="ECO:0007669"/>
    <property type="project" value="UniProtKB-UniRule"/>
</dbReference>
<dbReference type="FunFam" id="4.10.410.60:FF:000001">
    <property type="entry name" value="50S ribosomal protein L35"/>
    <property type="match status" value="1"/>
</dbReference>
<dbReference type="Gene3D" id="4.10.410.60">
    <property type="match status" value="1"/>
</dbReference>
<dbReference type="HAMAP" id="MF_00514">
    <property type="entry name" value="Ribosomal_bL35"/>
    <property type="match status" value="1"/>
</dbReference>
<dbReference type="InterPro" id="IPR001706">
    <property type="entry name" value="Ribosomal_bL35"/>
</dbReference>
<dbReference type="InterPro" id="IPR021137">
    <property type="entry name" value="Ribosomal_bL35-like"/>
</dbReference>
<dbReference type="InterPro" id="IPR018265">
    <property type="entry name" value="Ribosomal_bL35_CS"/>
</dbReference>
<dbReference type="InterPro" id="IPR037229">
    <property type="entry name" value="Ribosomal_bL35_sf"/>
</dbReference>
<dbReference type="NCBIfam" id="TIGR00001">
    <property type="entry name" value="rpmI_bact"/>
    <property type="match status" value="1"/>
</dbReference>
<dbReference type="PANTHER" id="PTHR33343">
    <property type="entry name" value="54S RIBOSOMAL PROTEIN BL35M"/>
    <property type="match status" value="1"/>
</dbReference>
<dbReference type="PANTHER" id="PTHR33343:SF1">
    <property type="entry name" value="LARGE RIBOSOMAL SUBUNIT PROTEIN BL35M"/>
    <property type="match status" value="1"/>
</dbReference>
<dbReference type="Pfam" id="PF01632">
    <property type="entry name" value="Ribosomal_L35p"/>
    <property type="match status" value="1"/>
</dbReference>
<dbReference type="PRINTS" id="PR00064">
    <property type="entry name" value="RIBOSOMALL35"/>
</dbReference>
<dbReference type="SUPFAM" id="SSF143034">
    <property type="entry name" value="L35p-like"/>
    <property type="match status" value="1"/>
</dbReference>
<dbReference type="PROSITE" id="PS00936">
    <property type="entry name" value="RIBOSOMAL_L35"/>
    <property type="match status" value="1"/>
</dbReference>
<gene>
    <name evidence="1" type="primary">rpmI</name>
    <name type="ordered locus">Dtpsy_1450</name>
</gene>
<comment type="similarity">
    <text evidence="1">Belongs to the bacterial ribosomal protein bL35 family.</text>
</comment>